<evidence type="ECO:0000255" key="1">
    <source>
        <dbReference type="PROSITE-ProRule" id="PRU00448"/>
    </source>
</evidence>
<keyword id="KW-0020">Allergen</keyword>
<keyword id="KW-0106">Calcium</keyword>
<keyword id="KW-0479">Metal-binding</keyword>
<keyword id="KW-0677">Repeat</keyword>
<proteinExistence type="evidence at protein level"/>
<reference key="1">
    <citation type="submission" date="1998-07" db="EMBL/GenBank/DDBJ databases">
        <title>Cloning and expression of a protein homologous to Ole e 3 from Syringa vulgaris.</title>
        <authorList>
            <person name="Ledesma A."/>
            <person name="Villalba M."/>
            <person name="Rodriguez R."/>
        </authorList>
    </citation>
    <scope>NUCLEOTIDE SEQUENCE [MRNA]</scope>
    <source>
        <tissue>Pollen</tissue>
    </source>
</reference>
<organism>
    <name type="scientific">Syringa vulgaris</name>
    <name type="common">Common lilac</name>
    <dbReference type="NCBI Taxonomy" id="34270"/>
    <lineage>
        <taxon>Eukaryota</taxon>
        <taxon>Viridiplantae</taxon>
        <taxon>Streptophyta</taxon>
        <taxon>Embryophyta</taxon>
        <taxon>Tracheophyta</taxon>
        <taxon>Spermatophyta</taxon>
        <taxon>Magnoliopsida</taxon>
        <taxon>eudicotyledons</taxon>
        <taxon>Gunneridae</taxon>
        <taxon>Pentapetalae</taxon>
        <taxon>asterids</taxon>
        <taxon>lamiids</taxon>
        <taxon>Lamiales</taxon>
        <taxon>Oleaceae</taxon>
        <taxon>Oleeae</taxon>
        <taxon>Syringa</taxon>
    </lineage>
</organism>
<feature type="chain" id="PRO_0000073676" description="Polcalcin Syr v 3">
    <location>
        <begin position="1"/>
        <end position="81"/>
    </location>
</feature>
<feature type="domain" description="EF-hand 1" evidence="1">
    <location>
        <begin position="3"/>
        <end position="38"/>
    </location>
</feature>
<feature type="domain" description="EF-hand 2" evidence="1">
    <location>
        <begin position="41"/>
        <end position="73"/>
    </location>
</feature>
<feature type="binding site" evidence="1">
    <location>
        <position position="16"/>
    </location>
    <ligand>
        <name>Ca(2+)</name>
        <dbReference type="ChEBI" id="CHEBI:29108"/>
        <label>1</label>
    </ligand>
</feature>
<feature type="binding site" evidence="1">
    <location>
        <position position="18"/>
    </location>
    <ligand>
        <name>Ca(2+)</name>
        <dbReference type="ChEBI" id="CHEBI:29108"/>
        <label>1</label>
    </ligand>
</feature>
<feature type="binding site" evidence="1">
    <location>
        <position position="20"/>
    </location>
    <ligand>
        <name>Ca(2+)</name>
        <dbReference type="ChEBI" id="CHEBI:29108"/>
        <label>1</label>
    </ligand>
</feature>
<feature type="binding site" evidence="1">
    <location>
        <position position="22"/>
    </location>
    <ligand>
        <name>Ca(2+)</name>
        <dbReference type="ChEBI" id="CHEBI:29108"/>
        <label>1</label>
    </ligand>
</feature>
<feature type="binding site" evidence="1">
    <location>
        <position position="27"/>
    </location>
    <ligand>
        <name>Ca(2+)</name>
        <dbReference type="ChEBI" id="CHEBI:29108"/>
        <label>1</label>
    </ligand>
</feature>
<feature type="binding site" evidence="1">
    <location>
        <position position="51"/>
    </location>
    <ligand>
        <name>Ca(2+)</name>
        <dbReference type="ChEBI" id="CHEBI:29108"/>
        <label>2</label>
    </ligand>
</feature>
<feature type="binding site" evidence="1">
    <location>
        <position position="53"/>
    </location>
    <ligand>
        <name>Ca(2+)</name>
        <dbReference type="ChEBI" id="CHEBI:29108"/>
        <label>2</label>
    </ligand>
</feature>
<feature type="binding site" evidence="1">
    <location>
        <position position="55"/>
    </location>
    <ligand>
        <name>Ca(2+)</name>
        <dbReference type="ChEBI" id="CHEBI:29108"/>
        <label>2</label>
    </ligand>
</feature>
<feature type="binding site" evidence="1">
    <location>
        <position position="62"/>
    </location>
    <ligand>
        <name>Ca(2+)</name>
        <dbReference type="ChEBI" id="CHEBI:29108"/>
        <label>2</label>
    </ligand>
</feature>
<gene>
    <name type="primary">SYRV3</name>
</gene>
<dbReference type="EMBL" id="AF078681">
    <property type="protein sequence ID" value="AAK01144.1"/>
    <property type="molecule type" value="mRNA"/>
</dbReference>
<dbReference type="SMR" id="P58171"/>
<dbReference type="Allergome" id="3495">
    <property type="allergen name" value="Syr v 3.0101"/>
</dbReference>
<dbReference type="Allergome" id="648">
    <property type="allergen name" value="Syr v 3"/>
</dbReference>
<dbReference type="GO" id="GO:0005509">
    <property type="term" value="F:calcium ion binding"/>
    <property type="evidence" value="ECO:0007669"/>
    <property type="project" value="InterPro"/>
</dbReference>
<dbReference type="CDD" id="cd00051">
    <property type="entry name" value="EFh"/>
    <property type="match status" value="1"/>
</dbReference>
<dbReference type="FunFam" id="1.10.238.10:FF:000178">
    <property type="entry name" value="Calmodulin-2 A"/>
    <property type="match status" value="1"/>
</dbReference>
<dbReference type="Gene3D" id="1.10.238.10">
    <property type="entry name" value="EF-hand"/>
    <property type="match status" value="1"/>
</dbReference>
<dbReference type="InterPro" id="IPR011992">
    <property type="entry name" value="EF-hand-dom_pair"/>
</dbReference>
<dbReference type="InterPro" id="IPR018247">
    <property type="entry name" value="EF_Hand_1_Ca_BS"/>
</dbReference>
<dbReference type="InterPro" id="IPR002048">
    <property type="entry name" value="EF_hand_dom"/>
</dbReference>
<dbReference type="InterPro" id="IPR039647">
    <property type="entry name" value="EF_hand_pair_protein_CML-like"/>
</dbReference>
<dbReference type="PANTHER" id="PTHR10891">
    <property type="entry name" value="EF-HAND CALCIUM-BINDING DOMAIN CONTAINING PROTEIN"/>
    <property type="match status" value="1"/>
</dbReference>
<dbReference type="Pfam" id="PF13499">
    <property type="entry name" value="EF-hand_7"/>
    <property type="match status" value="1"/>
</dbReference>
<dbReference type="SMART" id="SM00054">
    <property type="entry name" value="EFh"/>
    <property type="match status" value="2"/>
</dbReference>
<dbReference type="SUPFAM" id="SSF47473">
    <property type="entry name" value="EF-hand"/>
    <property type="match status" value="1"/>
</dbReference>
<dbReference type="PROSITE" id="PS00018">
    <property type="entry name" value="EF_HAND_1"/>
    <property type="match status" value="2"/>
</dbReference>
<dbReference type="PROSITE" id="PS50222">
    <property type="entry name" value="EF_HAND_2"/>
    <property type="match status" value="2"/>
</dbReference>
<name>POLC3_SYRVU</name>
<sequence length="81" mass="8994">MAEEVAELERIFKRFDANGDGKISSSELGETLKTLGSVTPEEIQRMMAEIDTDGDGFISFEEFKDFARANSGLIKDVAKIF</sequence>
<protein>
    <recommendedName>
        <fullName>Polcalcin Syr v 3</fullName>
    </recommendedName>
    <alternativeName>
        <fullName>Calcium-binding pollen allergen Syr v 3</fullName>
    </alternativeName>
    <allergenName>Syr v 3</allergenName>
</protein>
<accession>P58171</accession>
<comment type="allergen">
    <text>Causes an allergic reaction in human.</text>
</comment>